<evidence type="ECO:0000255" key="1">
    <source>
        <dbReference type="HAMAP-Rule" id="MF_01265"/>
    </source>
</evidence>
<organism>
    <name type="scientific">Ralstonia pickettii (strain 12J)</name>
    <dbReference type="NCBI Taxonomy" id="402626"/>
    <lineage>
        <taxon>Bacteria</taxon>
        <taxon>Pseudomonadati</taxon>
        <taxon>Pseudomonadota</taxon>
        <taxon>Betaproteobacteria</taxon>
        <taxon>Burkholderiales</taxon>
        <taxon>Burkholderiaceae</taxon>
        <taxon>Ralstonia</taxon>
    </lineage>
</organism>
<sequence>MLHVSMVGCGAIGQGVLELLKSDPDVCFDAVIVPEHAMDKAREAIAPFAPNARVTTHLSADAHTDLLVECAGHDALEEHVLPALEQGIDCLVVSVGALSQPGVAERLEAAARRGNAQVQLLSGAIGAIDALAAARVGGLDAVIYTGRKPPRAWKDTPAEQQFDLDALREPTVIFEGNAREAARLFPKNANVAATLSLAGLGLEHTHVKLLADPTVDENIHHVEARGAFGGFELTMRGKPLAANPKTSALTVFSVVRALGNRAHAVSI</sequence>
<name>ASPD_RALPJ</name>
<accession>B2UJ42</accession>
<keyword id="KW-0520">NAD</keyword>
<keyword id="KW-0521">NADP</keyword>
<keyword id="KW-0560">Oxidoreductase</keyword>
<keyword id="KW-0662">Pyridine nucleotide biosynthesis</keyword>
<proteinExistence type="inferred from homology"/>
<comment type="function">
    <text evidence="1">Specifically catalyzes the NAD or NADP-dependent dehydrogenation of L-aspartate to iminoaspartate.</text>
</comment>
<comment type="catalytic activity">
    <reaction evidence="1">
        <text>L-aspartate + NADP(+) + H2O = oxaloacetate + NH4(+) + NADPH + H(+)</text>
        <dbReference type="Rhea" id="RHEA:11784"/>
        <dbReference type="ChEBI" id="CHEBI:15377"/>
        <dbReference type="ChEBI" id="CHEBI:15378"/>
        <dbReference type="ChEBI" id="CHEBI:16452"/>
        <dbReference type="ChEBI" id="CHEBI:28938"/>
        <dbReference type="ChEBI" id="CHEBI:29991"/>
        <dbReference type="ChEBI" id="CHEBI:57783"/>
        <dbReference type="ChEBI" id="CHEBI:58349"/>
        <dbReference type="EC" id="1.4.1.21"/>
    </reaction>
</comment>
<comment type="catalytic activity">
    <reaction evidence="1">
        <text>L-aspartate + NAD(+) + H2O = oxaloacetate + NH4(+) + NADH + H(+)</text>
        <dbReference type="Rhea" id="RHEA:11788"/>
        <dbReference type="ChEBI" id="CHEBI:15377"/>
        <dbReference type="ChEBI" id="CHEBI:15378"/>
        <dbReference type="ChEBI" id="CHEBI:16452"/>
        <dbReference type="ChEBI" id="CHEBI:28938"/>
        <dbReference type="ChEBI" id="CHEBI:29991"/>
        <dbReference type="ChEBI" id="CHEBI:57540"/>
        <dbReference type="ChEBI" id="CHEBI:57945"/>
        <dbReference type="EC" id="1.4.1.21"/>
    </reaction>
</comment>
<comment type="pathway">
    <text evidence="1">Cofactor biosynthesis; NAD(+) biosynthesis; iminoaspartate from L-aspartate (dehydrogenase route): step 1/1.</text>
</comment>
<comment type="miscellaneous">
    <text evidence="1">The iminoaspartate product is unstable in aqueous solution and can decompose to oxaloacetate and ammonia.</text>
</comment>
<comment type="similarity">
    <text evidence="1">Belongs to the L-aspartate dehydrogenase family.</text>
</comment>
<gene>
    <name evidence="1" type="primary">nadX</name>
    <name type="ordered locus">Rpic_4503</name>
</gene>
<reference key="1">
    <citation type="submission" date="2008-05" db="EMBL/GenBank/DDBJ databases">
        <title>Complete sequence of chromosome 2 of Ralstonia pickettii 12J.</title>
        <authorList>
            <person name="Lucas S."/>
            <person name="Copeland A."/>
            <person name="Lapidus A."/>
            <person name="Glavina del Rio T."/>
            <person name="Dalin E."/>
            <person name="Tice H."/>
            <person name="Bruce D."/>
            <person name="Goodwin L."/>
            <person name="Pitluck S."/>
            <person name="Meincke L."/>
            <person name="Brettin T."/>
            <person name="Detter J.C."/>
            <person name="Han C."/>
            <person name="Kuske C.R."/>
            <person name="Schmutz J."/>
            <person name="Larimer F."/>
            <person name="Land M."/>
            <person name="Hauser L."/>
            <person name="Kyrpides N."/>
            <person name="Mikhailova N."/>
            <person name="Marsh T."/>
            <person name="Richardson P."/>
        </authorList>
    </citation>
    <scope>NUCLEOTIDE SEQUENCE [LARGE SCALE GENOMIC DNA]</scope>
    <source>
        <strain>12J</strain>
    </source>
</reference>
<dbReference type="EC" id="1.4.1.21" evidence="1"/>
<dbReference type="EMBL" id="CP001069">
    <property type="protein sequence ID" value="ACD29593.1"/>
    <property type="molecule type" value="Genomic_DNA"/>
</dbReference>
<dbReference type="SMR" id="B2UJ42"/>
<dbReference type="STRING" id="402626.Rpic_4503"/>
<dbReference type="KEGG" id="rpi:Rpic_4503"/>
<dbReference type="eggNOG" id="COG1712">
    <property type="taxonomic scope" value="Bacteria"/>
</dbReference>
<dbReference type="HOGENOM" id="CLU_089550_0_0_4"/>
<dbReference type="UniPathway" id="UPA00253">
    <property type="reaction ID" value="UER00456"/>
</dbReference>
<dbReference type="GO" id="GO:0033735">
    <property type="term" value="F:aspartate dehydrogenase activity"/>
    <property type="evidence" value="ECO:0007669"/>
    <property type="project" value="UniProtKB-EC"/>
</dbReference>
<dbReference type="GO" id="GO:0051287">
    <property type="term" value="F:NAD binding"/>
    <property type="evidence" value="ECO:0007669"/>
    <property type="project" value="UniProtKB-UniRule"/>
</dbReference>
<dbReference type="GO" id="GO:0050661">
    <property type="term" value="F:NADP binding"/>
    <property type="evidence" value="ECO:0007669"/>
    <property type="project" value="UniProtKB-UniRule"/>
</dbReference>
<dbReference type="GO" id="GO:0016639">
    <property type="term" value="F:oxidoreductase activity, acting on the CH-NH2 group of donors, NAD or NADP as acceptor"/>
    <property type="evidence" value="ECO:0007669"/>
    <property type="project" value="UniProtKB-UniRule"/>
</dbReference>
<dbReference type="GO" id="GO:0009435">
    <property type="term" value="P:NAD biosynthetic process"/>
    <property type="evidence" value="ECO:0007669"/>
    <property type="project" value="UniProtKB-UniRule"/>
</dbReference>
<dbReference type="Gene3D" id="3.30.360.10">
    <property type="entry name" value="Dihydrodipicolinate Reductase, domain 2"/>
    <property type="match status" value="1"/>
</dbReference>
<dbReference type="Gene3D" id="3.40.50.720">
    <property type="entry name" value="NAD(P)-binding Rossmann-like Domain"/>
    <property type="match status" value="1"/>
</dbReference>
<dbReference type="HAMAP" id="MF_01265">
    <property type="entry name" value="NadX"/>
    <property type="match status" value="1"/>
</dbReference>
<dbReference type="InterPro" id="IPR005106">
    <property type="entry name" value="Asp/hSer_DH_NAD-bd"/>
</dbReference>
<dbReference type="InterPro" id="IPR002811">
    <property type="entry name" value="Asp_DH"/>
</dbReference>
<dbReference type="InterPro" id="IPR020626">
    <property type="entry name" value="Asp_DH_prok"/>
</dbReference>
<dbReference type="InterPro" id="IPR011182">
    <property type="entry name" value="L-Asp_DH"/>
</dbReference>
<dbReference type="InterPro" id="IPR036291">
    <property type="entry name" value="NAD(P)-bd_dom_sf"/>
</dbReference>
<dbReference type="NCBIfam" id="NF009827">
    <property type="entry name" value="PRK13303.1-2"/>
    <property type="match status" value="1"/>
</dbReference>
<dbReference type="NCBIfam" id="NF009828">
    <property type="entry name" value="PRK13303.1-3"/>
    <property type="match status" value="1"/>
</dbReference>
<dbReference type="PANTHER" id="PTHR31873:SF6">
    <property type="entry name" value="ASPARTATE DEHYDROGENASE DOMAIN-CONTAINING PROTEIN"/>
    <property type="match status" value="1"/>
</dbReference>
<dbReference type="PANTHER" id="PTHR31873">
    <property type="entry name" value="L-ASPARTATE DEHYDROGENASE-RELATED"/>
    <property type="match status" value="1"/>
</dbReference>
<dbReference type="Pfam" id="PF01958">
    <property type="entry name" value="Asp_DH_C"/>
    <property type="match status" value="1"/>
</dbReference>
<dbReference type="Pfam" id="PF03447">
    <property type="entry name" value="NAD_binding_3"/>
    <property type="match status" value="1"/>
</dbReference>
<dbReference type="PIRSF" id="PIRSF005227">
    <property type="entry name" value="Asp_dh_NAD_syn"/>
    <property type="match status" value="1"/>
</dbReference>
<dbReference type="SUPFAM" id="SSF55347">
    <property type="entry name" value="Glyceraldehyde-3-phosphate dehydrogenase-like, C-terminal domain"/>
    <property type="match status" value="1"/>
</dbReference>
<dbReference type="SUPFAM" id="SSF51735">
    <property type="entry name" value="NAD(P)-binding Rossmann-fold domains"/>
    <property type="match status" value="1"/>
</dbReference>
<feature type="chain" id="PRO_1000140089" description="L-aspartate dehydrogenase">
    <location>
        <begin position="1"/>
        <end position="267"/>
    </location>
</feature>
<feature type="active site" evidence="1">
    <location>
        <position position="220"/>
    </location>
</feature>
<feature type="binding site" evidence="1">
    <location>
        <position position="124"/>
    </location>
    <ligand>
        <name>NAD(+)</name>
        <dbReference type="ChEBI" id="CHEBI:57540"/>
    </ligand>
</feature>
<feature type="binding site" evidence="1">
    <location>
        <position position="190"/>
    </location>
    <ligand>
        <name>NAD(+)</name>
        <dbReference type="ChEBI" id="CHEBI:57540"/>
    </ligand>
</feature>
<protein>
    <recommendedName>
        <fullName evidence="1">L-aspartate dehydrogenase</fullName>
        <ecNumber evidence="1">1.4.1.21</ecNumber>
    </recommendedName>
</protein>